<organism>
    <name type="scientific">Leptosphaeria maculans</name>
    <name type="common">Blackleg fungus</name>
    <name type="synonym">Phoma lingam</name>
    <dbReference type="NCBI Taxonomy" id="5022"/>
    <lineage>
        <taxon>Eukaryota</taxon>
        <taxon>Fungi</taxon>
        <taxon>Dikarya</taxon>
        <taxon>Ascomycota</taxon>
        <taxon>Pezizomycotina</taxon>
        <taxon>Dothideomycetes</taxon>
        <taxon>Pleosporomycetidae</taxon>
        <taxon>Pleosporales</taxon>
        <taxon>Pleosporineae</taxon>
        <taxon>Leptosphaeriaceae</taxon>
        <taxon>Plenodomus</taxon>
        <taxon>Plenodomus lingam/Leptosphaeria maculans species complex</taxon>
    </lineage>
</organism>
<accession>Q8NJS1</accession>
<comment type="function">
    <text evidence="1">Sterol glycosyltransferase responsible for the glycosylation of ergosterol to form ergosterol-glucoside.</text>
</comment>
<comment type="catalytic activity">
    <reaction evidence="1">
        <text>a sterol + UDP-alpha-D-glucose = a sterol 3-beta-D-glucoside + UDP + H(+)</text>
        <dbReference type="Rhea" id="RHEA:22724"/>
        <dbReference type="ChEBI" id="CHEBI:15378"/>
        <dbReference type="ChEBI" id="CHEBI:15889"/>
        <dbReference type="ChEBI" id="CHEBI:37424"/>
        <dbReference type="ChEBI" id="CHEBI:58223"/>
        <dbReference type="ChEBI" id="CHEBI:58885"/>
        <dbReference type="EC" id="2.4.1.173"/>
    </reaction>
    <physiologicalReaction direction="left-to-right" evidence="1">
        <dbReference type="Rhea" id="RHEA:22725"/>
    </physiologicalReaction>
</comment>
<comment type="catalytic activity">
    <reaction evidence="1">
        <text>ergosterol + UDP-alpha-D-glucose = ergosteryl 3-beta-D-glucoside + UDP + H(+)</text>
        <dbReference type="Rhea" id="RHEA:61836"/>
        <dbReference type="ChEBI" id="CHEBI:15378"/>
        <dbReference type="ChEBI" id="CHEBI:16933"/>
        <dbReference type="ChEBI" id="CHEBI:52973"/>
        <dbReference type="ChEBI" id="CHEBI:58223"/>
        <dbReference type="ChEBI" id="CHEBI:58885"/>
    </reaction>
    <physiologicalReaction direction="left-to-right" evidence="1">
        <dbReference type="Rhea" id="RHEA:61837"/>
    </physiologicalReaction>
</comment>
<comment type="subcellular location">
    <subcellularLocation>
        <location evidence="1">Cytoplasm</location>
    </subcellularLocation>
    <subcellularLocation>
        <location evidence="2">Preautophagosomal structure membrane</location>
        <topology evidence="2">Peripheral membrane protein</topology>
    </subcellularLocation>
</comment>
<comment type="domain">
    <text evidence="2">The GRAM and PH domains are required for the localization of ATG26 to the preautophagosomal structure (PAS) and are involved in autophagy (By similarity).</text>
</comment>
<comment type="similarity">
    <text evidence="7">Belongs to the glycosyltransferase 28 family.</text>
</comment>
<evidence type="ECO:0000250" key="1">
    <source>
        <dbReference type="UniProtKB" id="Q06321"/>
    </source>
</evidence>
<evidence type="ECO:0000250" key="2">
    <source>
        <dbReference type="UniProtKB" id="Q2U0C3"/>
    </source>
</evidence>
<evidence type="ECO:0000255" key="3"/>
<evidence type="ECO:0000255" key="4">
    <source>
        <dbReference type="PROSITE-ProRule" id="PRU00145"/>
    </source>
</evidence>
<evidence type="ECO:0000256" key="5">
    <source>
        <dbReference type="SAM" id="MobiDB-lite"/>
    </source>
</evidence>
<evidence type="ECO:0000303" key="6">
    <source ref="1"/>
</evidence>
<evidence type="ECO:0000305" key="7"/>
<protein>
    <recommendedName>
        <fullName evidence="7">Sterol 3-beta-glucosyltransferase</fullName>
        <ecNumber evidence="1">2.4.1.-</ecNumber>
        <ecNumber evidence="1">2.4.1.173</ecNumber>
    </recommendedName>
    <alternativeName>
        <fullName evidence="1">Autophagy-related protein 26</fullName>
    </alternativeName>
    <alternativeName>
        <fullName evidence="6">UDP-glycosyltransferase 51</fullName>
    </alternativeName>
</protein>
<keyword id="KW-0072">Autophagy</keyword>
<keyword id="KW-0963">Cytoplasm</keyword>
<keyword id="KW-0328">Glycosyltransferase</keyword>
<keyword id="KW-0444">Lipid biosynthesis</keyword>
<keyword id="KW-0443">Lipid metabolism</keyword>
<keyword id="KW-0472">Membrane</keyword>
<keyword id="KW-0653">Protein transport</keyword>
<keyword id="KW-0677">Repeat</keyword>
<keyword id="KW-0752">Steroid biosynthesis</keyword>
<keyword id="KW-0753">Steroid metabolism</keyword>
<keyword id="KW-0756">Sterol biosynthesis</keyword>
<keyword id="KW-1207">Sterol metabolism</keyword>
<keyword id="KW-0808">Transferase</keyword>
<keyword id="KW-0813">Transport</keyword>
<proteinExistence type="inferred from homology"/>
<sequence length="1456" mass="162245">MASQDRGSDRTSRRLTKKRKDGKKPMRDVSLDMPERFKDGDDAHEDVTAPKGNHTMSMNQSIFSMIARAGQQSNTDLGTMQEVDSGDSDDEGTRNVPYHILDGAARLSRLSTANDFQKTSGQTRDGKTEKGKHRRALSENKLLRSLPKLKIASRKDARSDGQGADQMSSSQFLPPRPSPEGSMPAPASSPPPPAAKGRVRPGDGIQMEKGRNVARKTRQRSPAAAATGEAPVSLAKRIQHIFEFAQEEEVISEYPCWLLQSILLQGYMYITQKHICFYAYIPKKHHDVSKTGYLSKRGRSKHNRYWFILRGDVLAYYTNPAELYFPRNRINLQYAISAEVLEPKRKGDEETSFVVTTDERTYQFKADSVASAREWVKSIQKVIFRTHNEGNSVKISLPIQNVLEIEESSILDFAETAKVRVIDNDETFAIDEYFFSFFTKGQDALNVLRIMINDNEHHQAAQKPVEPPSRALGQSDSGFMASTNAPSEVPHITENVRATLSPLTAPHVGRSSMSDISVRSSVDANRKNRDVRRSMDAGRTLRRWSLEGRRLSHEAHRSPSPSGHDKTHKGRVGDRSPKSPRATDSDSATFSLDPGTESSAAIQSMDDSTASASQILDRSDLFRAPVVSSPNAFSNGVNMSAHSQDTTRSSAPRPAYSKGTHPTTSPSIDPLSPGAPDGEYDTDAGGATRLSGSSSALQDIASYPLQKASGLAGFLRTRSKKMGNLLAAESMGYYEKVSGMLAGGRKHYNTAEGLETDDQVNVYEDDEDAAKATDNFREHFAFREDEVLQSSFFASLQRVLPNYGKIYISGRYFCFRSLMPTSKTKIILPMKDIENVNKEKGFRLGYYGLAIVIRGHEELFFEFGKAEYRDECAITVLRILENTKYLEDDQSSSSGVDSNDEAAKAEHDLLQQAREDNNVDKTKNLSEIVRAAADDRIPLIFDDPLASFVDFKPPEPLTIVCLTIGSRGDVQPYIALCKELLKEGHKPRIATHAEFEPWVRKHGIDFAPVDGNPAELMRICVEHGMFTYNFMKEANSKFRGWLDDVCSSSWRACQGADVLIESPSTMAGIHIAEALEIPYFRAFTMPWTRTRAYPHAFSVLEKKMGGGYNSITYITFDTIFWTAISGQINKWRRRELGLQNTSQSKMQASLRPFLYNFSPHVVPPPLDWPDWVRVTGYWFLDEADTYEPPADLVAFMDKARKDGKKLVYVGFGSIVIDDPAALTKTVVDSVLKADVRCVLSKGWSDRLETKDASKPEIPLPSEIFQIQSAPHDWLFKQMDAAVHHGGSGTTGASLRAGIPTIIKPFFGDQYFFAQRVEDMGVGVWLKKVNTSVFSRALWEVTNSQRMIVKARVLGQKIRKDNGTQVAIQTIYRELDRARSLVKKHAKLDGELSEEFEEDWTMVEDGEEIDVPHPFEVQQPVAGISQDASKMGGGSLVLGSMVLKGAQKRSPESAYRG</sequence>
<gene>
    <name evidence="1" type="primary">ATG26</name>
    <name evidence="6" type="synonym">UGT51</name>
</gene>
<reference key="1">
    <citation type="journal article" date="2003" name="Physiol. Mol. Plant Pathol.">
        <title>Characterization of neutral trehalase and UDP-glucose:sterol glycosyltransferase genes from the plant pathogenic fungus Leptosphaeria maculans.</title>
        <authorList>
            <person name="Idnurm A."/>
            <person name="Warnecke D.C."/>
            <person name="Heinz E."/>
            <person name="Howlett B.J."/>
        </authorList>
    </citation>
    <scope>NUCLEOTIDE SEQUENCE [GENOMIC DNA]</scope>
    <scope>IDENTIFICATION</scope>
</reference>
<feature type="chain" id="PRO_0000215612" description="Sterol 3-beta-glucosyltransferase">
    <location>
        <begin position="1"/>
        <end position="1456"/>
    </location>
</feature>
<feature type="domain" description="GRAM 1" evidence="3">
    <location>
        <begin position="236"/>
        <end position="283"/>
    </location>
</feature>
<feature type="domain" description="PH" evidence="4">
    <location>
        <begin position="287"/>
        <end position="384"/>
    </location>
</feature>
<feature type="domain" description="GRAM 2" evidence="3">
    <location>
        <begin position="774"/>
        <end position="840"/>
    </location>
</feature>
<feature type="region of interest" description="Disordered" evidence="5">
    <location>
        <begin position="1"/>
        <end position="229"/>
    </location>
</feature>
<feature type="region of interest" description="Disordered" evidence="5">
    <location>
        <begin position="500"/>
        <end position="612"/>
    </location>
</feature>
<feature type="region of interest" description="Disordered" evidence="5">
    <location>
        <begin position="631"/>
        <end position="691"/>
    </location>
</feature>
<feature type="compositionally biased region" description="Basic and acidic residues" evidence="5">
    <location>
        <begin position="1"/>
        <end position="12"/>
    </location>
</feature>
<feature type="compositionally biased region" description="Basic residues" evidence="5">
    <location>
        <begin position="13"/>
        <end position="22"/>
    </location>
</feature>
<feature type="compositionally biased region" description="Basic and acidic residues" evidence="5">
    <location>
        <begin position="23"/>
        <end position="48"/>
    </location>
</feature>
<feature type="compositionally biased region" description="Polar residues" evidence="5">
    <location>
        <begin position="54"/>
        <end position="63"/>
    </location>
</feature>
<feature type="compositionally biased region" description="Polar residues" evidence="5">
    <location>
        <begin position="109"/>
        <end position="123"/>
    </location>
</feature>
<feature type="compositionally biased region" description="Low complexity" evidence="5">
    <location>
        <begin position="510"/>
        <end position="523"/>
    </location>
</feature>
<feature type="compositionally biased region" description="Basic and acidic residues" evidence="5">
    <location>
        <begin position="524"/>
        <end position="536"/>
    </location>
</feature>
<feature type="compositionally biased region" description="Basic and acidic residues" evidence="5">
    <location>
        <begin position="544"/>
        <end position="557"/>
    </location>
</feature>
<feature type="compositionally biased region" description="Basic and acidic residues" evidence="5">
    <location>
        <begin position="571"/>
        <end position="584"/>
    </location>
</feature>
<feature type="compositionally biased region" description="Polar residues" evidence="5">
    <location>
        <begin position="585"/>
        <end position="612"/>
    </location>
</feature>
<feature type="compositionally biased region" description="Polar residues" evidence="5">
    <location>
        <begin position="631"/>
        <end position="650"/>
    </location>
</feature>
<feature type="binding site" evidence="1">
    <location>
        <position position="966"/>
    </location>
    <ligand>
        <name>UDP-alpha-D-glucose</name>
        <dbReference type="ChEBI" id="CHEBI:58885"/>
    </ligand>
</feature>
<feature type="binding site" evidence="1">
    <location>
        <position position="967"/>
    </location>
    <ligand>
        <name>UDP-alpha-D-glucose</name>
        <dbReference type="ChEBI" id="CHEBI:58885"/>
    </ligand>
</feature>
<feature type="binding site" evidence="1">
    <location>
        <position position="969"/>
    </location>
    <ligand>
        <name>UDP-alpha-D-glucose</name>
        <dbReference type="ChEBI" id="CHEBI:58885"/>
    </ligand>
</feature>
<feature type="binding site" evidence="1">
    <location>
        <position position="1269"/>
    </location>
    <ligand>
        <name>UDP-alpha-D-glucose</name>
        <dbReference type="ChEBI" id="CHEBI:58885"/>
    </ligand>
</feature>
<feature type="binding site" evidence="1">
    <location>
        <position position="1271"/>
    </location>
    <ligand>
        <name>UDP-alpha-D-glucose</name>
        <dbReference type="ChEBI" id="CHEBI:58885"/>
    </ligand>
</feature>
<feature type="binding site" evidence="1">
    <location>
        <position position="1284"/>
    </location>
    <ligand>
        <name>UDP-alpha-D-glucose</name>
        <dbReference type="ChEBI" id="CHEBI:58885"/>
    </ligand>
</feature>
<feature type="binding site" evidence="1">
    <location>
        <position position="1287"/>
    </location>
    <ligand>
        <name>UDP-alpha-D-glucose</name>
        <dbReference type="ChEBI" id="CHEBI:58885"/>
    </ligand>
</feature>
<feature type="binding site" evidence="1">
    <location>
        <position position="1288"/>
    </location>
    <ligand>
        <name>UDP-alpha-D-glucose</name>
        <dbReference type="ChEBI" id="CHEBI:58885"/>
    </ligand>
</feature>
<feature type="binding site" evidence="1">
    <location>
        <position position="1289"/>
    </location>
    <ligand>
        <name>UDP-alpha-D-glucose</name>
        <dbReference type="ChEBI" id="CHEBI:58885"/>
    </ligand>
</feature>
<feature type="binding site" evidence="1">
    <location>
        <position position="1308"/>
    </location>
    <ligand>
        <name>UDP-alpha-D-glucose</name>
        <dbReference type="ChEBI" id="CHEBI:58885"/>
    </ligand>
</feature>
<feature type="binding site" evidence="1">
    <location>
        <position position="1309"/>
    </location>
    <ligand>
        <name>UDP-alpha-D-glucose</name>
        <dbReference type="ChEBI" id="CHEBI:58885"/>
    </ligand>
</feature>
<name>ATG26_LEPMC</name>
<dbReference type="EC" id="2.4.1.-" evidence="1"/>
<dbReference type="EC" id="2.4.1.173" evidence="1"/>
<dbReference type="EMBL" id="AF522873">
    <property type="protein sequence ID" value="AAM81359.1"/>
    <property type="molecule type" value="Genomic_DNA"/>
</dbReference>
<dbReference type="RefSeq" id="XP_003845422.2">
    <property type="nucleotide sequence ID" value="XM_003845374.2"/>
</dbReference>
<dbReference type="SMR" id="Q8NJS1"/>
<dbReference type="CAZy" id="GT1">
    <property type="family name" value="Glycosyltransferase Family 1"/>
</dbReference>
<dbReference type="GeneID" id="13286371"/>
<dbReference type="GO" id="GO:0034045">
    <property type="term" value="C:phagophore assembly site membrane"/>
    <property type="evidence" value="ECO:0007669"/>
    <property type="project" value="UniProtKB-SubCell"/>
</dbReference>
<dbReference type="GO" id="GO:0016906">
    <property type="term" value="F:sterol 3-beta-glucosyltransferase activity"/>
    <property type="evidence" value="ECO:0007669"/>
    <property type="project" value="UniProtKB-EC"/>
</dbReference>
<dbReference type="GO" id="GO:0006914">
    <property type="term" value="P:autophagy"/>
    <property type="evidence" value="ECO:0007669"/>
    <property type="project" value="UniProtKB-KW"/>
</dbReference>
<dbReference type="GO" id="GO:0005975">
    <property type="term" value="P:carbohydrate metabolic process"/>
    <property type="evidence" value="ECO:0007669"/>
    <property type="project" value="InterPro"/>
</dbReference>
<dbReference type="GO" id="GO:0030259">
    <property type="term" value="P:lipid glycosylation"/>
    <property type="evidence" value="ECO:0007669"/>
    <property type="project" value="InterPro"/>
</dbReference>
<dbReference type="GO" id="GO:0015031">
    <property type="term" value="P:protein transport"/>
    <property type="evidence" value="ECO:0007669"/>
    <property type="project" value="UniProtKB-KW"/>
</dbReference>
<dbReference type="GO" id="GO:0016126">
    <property type="term" value="P:sterol biosynthetic process"/>
    <property type="evidence" value="ECO:0007669"/>
    <property type="project" value="UniProtKB-KW"/>
</dbReference>
<dbReference type="CDD" id="cd03784">
    <property type="entry name" value="GT1_Gtf-like"/>
    <property type="match status" value="1"/>
</dbReference>
<dbReference type="CDD" id="cd13215">
    <property type="entry name" value="PH-GRAM1_AGT26"/>
    <property type="match status" value="1"/>
</dbReference>
<dbReference type="CDD" id="cd13216">
    <property type="entry name" value="PH-GRAM2_AGT26"/>
    <property type="match status" value="1"/>
</dbReference>
<dbReference type="FunFam" id="2.30.29.30:FF:000303">
    <property type="entry name" value="Sterol 3-beta-glucosyltransferase"/>
    <property type="match status" value="1"/>
</dbReference>
<dbReference type="FunFam" id="2.30.29.30:FF:000391">
    <property type="entry name" value="Sterol 3-beta-glucosyltransferase"/>
    <property type="match status" value="1"/>
</dbReference>
<dbReference type="FunFam" id="3.40.50.2000:FF:000029">
    <property type="entry name" value="Sterol 3-beta-glucosyltransferase"/>
    <property type="match status" value="1"/>
</dbReference>
<dbReference type="FunFam" id="3.40.50.2000:FF:000009">
    <property type="entry name" value="Sterol 3-beta-glucosyltransferase UGT80A2"/>
    <property type="match status" value="1"/>
</dbReference>
<dbReference type="Gene3D" id="3.40.50.2000">
    <property type="entry name" value="Glycogen Phosphorylase B"/>
    <property type="match status" value="2"/>
</dbReference>
<dbReference type="Gene3D" id="2.30.29.30">
    <property type="entry name" value="Pleckstrin-homology domain (PH domain)/Phosphotyrosine-binding domain (PTB)"/>
    <property type="match status" value="3"/>
</dbReference>
<dbReference type="InterPro" id="IPR048066">
    <property type="entry name" value="ATG26_PH_GRAM1"/>
</dbReference>
<dbReference type="InterPro" id="IPR048065">
    <property type="entry name" value="ATG26_PH_GRAM2"/>
</dbReference>
<dbReference type="InterPro" id="IPR010610">
    <property type="entry name" value="EryCIII-like_C"/>
</dbReference>
<dbReference type="InterPro" id="IPR050426">
    <property type="entry name" value="Glycosyltransferase_28"/>
</dbReference>
<dbReference type="InterPro" id="IPR004276">
    <property type="entry name" value="GlycoTrans_28_N"/>
</dbReference>
<dbReference type="InterPro" id="IPR004182">
    <property type="entry name" value="GRAM"/>
</dbReference>
<dbReference type="InterPro" id="IPR011993">
    <property type="entry name" value="PH-like_dom_sf"/>
</dbReference>
<dbReference type="InterPro" id="IPR001849">
    <property type="entry name" value="PH_domain"/>
</dbReference>
<dbReference type="InterPro" id="IPR002213">
    <property type="entry name" value="UDP_glucos_trans"/>
</dbReference>
<dbReference type="PANTHER" id="PTHR48050">
    <property type="entry name" value="STEROL 3-BETA-GLUCOSYLTRANSFERASE"/>
    <property type="match status" value="1"/>
</dbReference>
<dbReference type="PANTHER" id="PTHR48050:SF25">
    <property type="entry name" value="STEROL 3-BETA-GLUCOSYLTRANSFERASE"/>
    <property type="match status" value="1"/>
</dbReference>
<dbReference type="Pfam" id="PF06722">
    <property type="entry name" value="EryCIII-like_C"/>
    <property type="match status" value="1"/>
</dbReference>
<dbReference type="Pfam" id="PF03033">
    <property type="entry name" value="Glyco_transf_28"/>
    <property type="match status" value="1"/>
</dbReference>
<dbReference type="Pfam" id="PF02893">
    <property type="entry name" value="GRAM"/>
    <property type="match status" value="2"/>
</dbReference>
<dbReference type="Pfam" id="PF00169">
    <property type="entry name" value="PH"/>
    <property type="match status" value="1"/>
</dbReference>
<dbReference type="SMART" id="SM00568">
    <property type="entry name" value="GRAM"/>
    <property type="match status" value="2"/>
</dbReference>
<dbReference type="SMART" id="SM00233">
    <property type="entry name" value="PH"/>
    <property type="match status" value="1"/>
</dbReference>
<dbReference type="SUPFAM" id="SSF50729">
    <property type="entry name" value="PH domain-like"/>
    <property type="match status" value="1"/>
</dbReference>
<dbReference type="SUPFAM" id="SSF53756">
    <property type="entry name" value="UDP-Glycosyltransferase/glycogen phosphorylase"/>
    <property type="match status" value="1"/>
</dbReference>
<dbReference type="PROSITE" id="PS50003">
    <property type="entry name" value="PH_DOMAIN"/>
    <property type="match status" value="1"/>
</dbReference>